<reference key="1">
    <citation type="submission" date="2006-05" db="EMBL/GenBank/DDBJ databases">
        <authorList>
            <consortium name="Genoscope"/>
        </authorList>
    </citation>
    <scope>NUCLEOTIDE SEQUENCE [LARGE SCALE GENOMIC DNA]</scope>
    <source>
        <strain>RCC307</strain>
    </source>
</reference>
<accession>A5GWI1</accession>
<name>PSBN_SYNR3</name>
<protein>
    <recommendedName>
        <fullName evidence="1">Protein PsbN</fullName>
    </recommendedName>
</protein>
<feature type="chain" id="PRO_1000004130" description="Protein PsbN">
    <location>
        <begin position="1"/>
        <end position="46"/>
    </location>
</feature>
<feature type="transmembrane region" description="Helical" evidence="1">
    <location>
        <begin position="10"/>
        <end position="30"/>
    </location>
</feature>
<organism>
    <name type="scientific">Synechococcus sp. (strain RCC307)</name>
    <dbReference type="NCBI Taxonomy" id="316278"/>
    <lineage>
        <taxon>Bacteria</taxon>
        <taxon>Bacillati</taxon>
        <taxon>Cyanobacteriota</taxon>
        <taxon>Cyanophyceae</taxon>
        <taxon>Synechococcales</taxon>
        <taxon>Synechococcaceae</taxon>
        <taxon>Synechococcus</taxon>
    </lineage>
</organism>
<evidence type="ECO:0000255" key="1">
    <source>
        <dbReference type="HAMAP-Rule" id="MF_00293"/>
    </source>
</evidence>
<proteinExistence type="inferred from homology"/>
<comment type="function">
    <text evidence="1">May play a role in photosystem I and II biogenesis.</text>
</comment>
<comment type="subcellular location">
    <subcellularLocation>
        <location evidence="1">Cellular thylakoid membrane</location>
        <topology evidence="1">Single-pass membrane protein</topology>
    </subcellularLocation>
</comment>
<comment type="similarity">
    <text evidence="1">Belongs to the PsbN family.</text>
</comment>
<comment type="caution">
    <text evidence="1">Originally thought to be a component of PSII; based on experiments in Synechocystis, N.tabacum and barley, and its absence from PSII in T.elongatus and T.vulcanus, this is probably not true.</text>
</comment>
<sequence>MESTSPALSVSIAVLTALLGLTGFGIYTAFGPPSRQLDDPFDDHDD</sequence>
<keyword id="KW-0472">Membrane</keyword>
<keyword id="KW-1185">Reference proteome</keyword>
<keyword id="KW-0793">Thylakoid</keyword>
<keyword id="KW-0812">Transmembrane</keyword>
<keyword id="KW-1133">Transmembrane helix</keyword>
<gene>
    <name evidence="1" type="primary">psbN</name>
    <name type="ordered locus">SynRCC307_2337</name>
</gene>
<dbReference type="EMBL" id="CT978603">
    <property type="protein sequence ID" value="CAK29240.1"/>
    <property type="molecule type" value="Genomic_DNA"/>
</dbReference>
<dbReference type="SMR" id="A5GWI1"/>
<dbReference type="STRING" id="316278.SynRCC307_2337"/>
<dbReference type="KEGG" id="syr:SynRCC307_2337"/>
<dbReference type="eggNOG" id="ENOG50339MH">
    <property type="taxonomic scope" value="Bacteria"/>
</dbReference>
<dbReference type="HOGENOM" id="CLU_205504_1_0_3"/>
<dbReference type="OrthoDB" id="532561at2"/>
<dbReference type="Proteomes" id="UP000001115">
    <property type="component" value="Chromosome"/>
</dbReference>
<dbReference type="GO" id="GO:0031676">
    <property type="term" value="C:plasma membrane-derived thylakoid membrane"/>
    <property type="evidence" value="ECO:0007669"/>
    <property type="project" value="UniProtKB-SubCell"/>
</dbReference>
<dbReference type="GO" id="GO:0015979">
    <property type="term" value="P:photosynthesis"/>
    <property type="evidence" value="ECO:0007669"/>
    <property type="project" value="InterPro"/>
</dbReference>
<dbReference type="HAMAP" id="MF_00293">
    <property type="entry name" value="PSII_PsbN"/>
    <property type="match status" value="1"/>
</dbReference>
<dbReference type="InterPro" id="IPR003398">
    <property type="entry name" value="PSII_PsbN"/>
</dbReference>
<dbReference type="NCBIfam" id="NF009650">
    <property type="entry name" value="PRK13183.1"/>
    <property type="match status" value="1"/>
</dbReference>
<dbReference type="PANTHER" id="PTHR35326">
    <property type="entry name" value="PROTEIN PSBN"/>
    <property type="match status" value="1"/>
</dbReference>
<dbReference type="PANTHER" id="PTHR35326:SF3">
    <property type="entry name" value="PROTEIN PSBN"/>
    <property type="match status" value="1"/>
</dbReference>
<dbReference type="Pfam" id="PF02468">
    <property type="entry name" value="PsbN"/>
    <property type="match status" value="1"/>
</dbReference>